<sequence length="361" mass="38841">MAALSLKGVRKSYDGKQHVLHGIDVEIADGEFIVLVGPSGCGKSTLLRMIAGLESVTDGEIAIGDRVVNTLEPKDRDIAMVFQNYALYPHMTVAQNMGYGLKIRGIERATIDSRVAAAAKILELEPLLARRPRELSGGQRQRVAMGRAIVREPSVFLFDEPLSNLDAKLRVQMRLEIQRLHARLATTSVYVTHDQIEAMTLAQRVIVMNRGYAEQIGAPVDVYEKPATVFVAGFIGSPAMNLMHGRLSEDGASFTVAGGGPALPVAGAPGIGREIATGRDWVLGVRPEHMTPQPGVAQATLPVDSCELLGADNLAHGRWGDHDIAVRLPHADRPARGTALAAALPAHRLHFFDPESGKRAG</sequence>
<feature type="chain" id="PRO_0000289738" description="sn-glycerol-3-phosphate import ATP-binding protein UgpC">
    <location>
        <begin position="1"/>
        <end position="361"/>
    </location>
</feature>
<feature type="domain" description="ABC transporter" evidence="1">
    <location>
        <begin position="4"/>
        <end position="235"/>
    </location>
</feature>
<feature type="binding site" evidence="1">
    <location>
        <begin position="37"/>
        <end position="44"/>
    </location>
    <ligand>
        <name>ATP</name>
        <dbReference type="ChEBI" id="CHEBI:30616"/>
    </ligand>
</feature>
<dbReference type="EC" id="7.6.2.10" evidence="1"/>
<dbReference type="EMBL" id="CP000378">
    <property type="protein sequence ID" value="ABF77607.1"/>
    <property type="molecule type" value="Genomic_DNA"/>
</dbReference>
<dbReference type="SMR" id="Q1BRZ8"/>
<dbReference type="HOGENOM" id="CLU_000604_1_1_4"/>
<dbReference type="GO" id="GO:0055052">
    <property type="term" value="C:ATP-binding cassette (ABC) transporter complex, substrate-binding subunit-containing"/>
    <property type="evidence" value="ECO:0007669"/>
    <property type="project" value="TreeGrafter"/>
</dbReference>
<dbReference type="GO" id="GO:0015430">
    <property type="term" value="F:ABC-type glycerol-3-phosphate transporter activity"/>
    <property type="evidence" value="ECO:0007669"/>
    <property type="project" value="UniProtKB-EC"/>
</dbReference>
<dbReference type="GO" id="GO:0005524">
    <property type="term" value="F:ATP binding"/>
    <property type="evidence" value="ECO:0007669"/>
    <property type="project" value="UniProtKB-KW"/>
</dbReference>
<dbReference type="GO" id="GO:0016887">
    <property type="term" value="F:ATP hydrolysis activity"/>
    <property type="evidence" value="ECO:0007669"/>
    <property type="project" value="InterPro"/>
</dbReference>
<dbReference type="GO" id="GO:0008643">
    <property type="term" value="P:carbohydrate transport"/>
    <property type="evidence" value="ECO:0007669"/>
    <property type="project" value="InterPro"/>
</dbReference>
<dbReference type="GO" id="GO:0001407">
    <property type="term" value="P:glycerophosphodiester transmembrane transport"/>
    <property type="evidence" value="ECO:0007669"/>
    <property type="project" value="TreeGrafter"/>
</dbReference>
<dbReference type="CDD" id="cd03301">
    <property type="entry name" value="ABC_MalK_N"/>
    <property type="match status" value="1"/>
</dbReference>
<dbReference type="FunFam" id="3.40.50.300:FF:000042">
    <property type="entry name" value="Maltose/maltodextrin ABC transporter, ATP-binding protein"/>
    <property type="match status" value="1"/>
</dbReference>
<dbReference type="Gene3D" id="2.40.50.100">
    <property type="match status" value="1"/>
</dbReference>
<dbReference type="Gene3D" id="2.40.50.140">
    <property type="entry name" value="Nucleic acid-binding proteins"/>
    <property type="match status" value="1"/>
</dbReference>
<dbReference type="Gene3D" id="3.40.50.300">
    <property type="entry name" value="P-loop containing nucleotide triphosphate hydrolases"/>
    <property type="match status" value="1"/>
</dbReference>
<dbReference type="InterPro" id="IPR003593">
    <property type="entry name" value="AAA+_ATPase"/>
</dbReference>
<dbReference type="InterPro" id="IPR003439">
    <property type="entry name" value="ABC_transporter-like_ATP-bd"/>
</dbReference>
<dbReference type="InterPro" id="IPR017871">
    <property type="entry name" value="ABC_transporter-like_CS"/>
</dbReference>
<dbReference type="InterPro" id="IPR015855">
    <property type="entry name" value="ABC_transpr_MalK-like"/>
</dbReference>
<dbReference type="InterPro" id="IPR047641">
    <property type="entry name" value="ABC_transpr_MalK/UgpC-like"/>
</dbReference>
<dbReference type="InterPro" id="IPR008995">
    <property type="entry name" value="Mo/tungstate-bd_C_term_dom"/>
</dbReference>
<dbReference type="InterPro" id="IPR012340">
    <property type="entry name" value="NA-bd_OB-fold"/>
</dbReference>
<dbReference type="InterPro" id="IPR040582">
    <property type="entry name" value="OB_MalK-like"/>
</dbReference>
<dbReference type="InterPro" id="IPR027417">
    <property type="entry name" value="P-loop_NTPase"/>
</dbReference>
<dbReference type="NCBIfam" id="NF008653">
    <property type="entry name" value="PRK11650.1"/>
    <property type="match status" value="1"/>
</dbReference>
<dbReference type="PANTHER" id="PTHR43875">
    <property type="entry name" value="MALTODEXTRIN IMPORT ATP-BINDING PROTEIN MSMX"/>
    <property type="match status" value="1"/>
</dbReference>
<dbReference type="PANTHER" id="PTHR43875:SF12">
    <property type="entry name" value="SN-GLYCEROL-3-PHOSPHATE IMPORT ATP-BINDING PROTEIN UGPC"/>
    <property type="match status" value="1"/>
</dbReference>
<dbReference type="Pfam" id="PF00005">
    <property type="entry name" value="ABC_tran"/>
    <property type="match status" value="1"/>
</dbReference>
<dbReference type="Pfam" id="PF17912">
    <property type="entry name" value="OB_MalK"/>
    <property type="match status" value="1"/>
</dbReference>
<dbReference type="SMART" id="SM00382">
    <property type="entry name" value="AAA"/>
    <property type="match status" value="1"/>
</dbReference>
<dbReference type="SUPFAM" id="SSF50331">
    <property type="entry name" value="MOP-like"/>
    <property type="match status" value="1"/>
</dbReference>
<dbReference type="SUPFAM" id="SSF52540">
    <property type="entry name" value="P-loop containing nucleoside triphosphate hydrolases"/>
    <property type="match status" value="1"/>
</dbReference>
<dbReference type="PROSITE" id="PS00211">
    <property type="entry name" value="ABC_TRANSPORTER_1"/>
    <property type="match status" value="1"/>
</dbReference>
<dbReference type="PROSITE" id="PS50893">
    <property type="entry name" value="ABC_TRANSPORTER_2"/>
    <property type="match status" value="1"/>
</dbReference>
<dbReference type="PROSITE" id="PS51315">
    <property type="entry name" value="UGPC"/>
    <property type="match status" value="1"/>
</dbReference>
<keyword id="KW-0067">ATP-binding</keyword>
<keyword id="KW-0997">Cell inner membrane</keyword>
<keyword id="KW-1003">Cell membrane</keyword>
<keyword id="KW-0472">Membrane</keyword>
<keyword id="KW-0547">Nucleotide-binding</keyword>
<keyword id="KW-0762">Sugar transport</keyword>
<keyword id="KW-1278">Translocase</keyword>
<keyword id="KW-0813">Transport</keyword>
<proteinExistence type="inferred from homology"/>
<reference key="1">
    <citation type="submission" date="2006-05" db="EMBL/GenBank/DDBJ databases">
        <title>Complete sequence of chromosome 1 of Burkholderia cenocepacia AU 1054.</title>
        <authorList>
            <consortium name="US DOE Joint Genome Institute"/>
            <person name="Copeland A."/>
            <person name="Lucas S."/>
            <person name="Lapidus A."/>
            <person name="Barry K."/>
            <person name="Detter J.C."/>
            <person name="Glavina del Rio T."/>
            <person name="Hammon N."/>
            <person name="Israni S."/>
            <person name="Dalin E."/>
            <person name="Tice H."/>
            <person name="Pitluck S."/>
            <person name="Chain P."/>
            <person name="Malfatti S."/>
            <person name="Shin M."/>
            <person name="Vergez L."/>
            <person name="Schmutz J."/>
            <person name="Larimer F."/>
            <person name="Land M."/>
            <person name="Hauser L."/>
            <person name="Kyrpides N."/>
            <person name="Lykidis A."/>
            <person name="LiPuma J.J."/>
            <person name="Konstantinidis K."/>
            <person name="Tiedje J.M."/>
            <person name="Richardson P."/>
        </authorList>
    </citation>
    <scope>NUCLEOTIDE SEQUENCE [LARGE SCALE GENOMIC DNA]</scope>
    <source>
        <strain>AU 1054</strain>
    </source>
</reference>
<gene>
    <name evidence="1" type="primary">ugpC</name>
    <name type="ordered locus">Bcen_2709</name>
</gene>
<name>UGPC_BURO1</name>
<organism>
    <name type="scientific">Burkholderia orbicola (strain AU 1054)</name>
    <dbReference type="NCBI Taxonomy" id="331271"/>
    <lineage>
        <taxon>Bacteria</taxon>
        <taxon>Pseudomonadati</taxon>
        <taxon>Pseudomonadota</taxon>
        <taxon>Betaproteobacteria</taxon>
        <taxon>Burkholderiales</taxon>
        <taxon>Burkholderiaceae</taxon>
        <taxon>Burkholderia</taxon>
        <taxon>Burkholderia cepacia complex</taxon>
        <taxon>Burkholderia orbicola</taxon>
    </lineage>
</organism>
<accession>Q1BRZ8</accession>
<comment type="function">
    <text evidence="1">Part of the ABC transporter complex UgpBAEC involved in sn-glycerol-3-phosphate (G3P) import. Responsible for energy coupling to the transport system.</text>
</comment>
<comment type="catalytic activity">
    <reaction evidence="1">
        <text>sn-glycerol 3-phosphate(out) + ATP + H2O = sn-glycerol 3-phosphate(in) + ADP + phosphate + H(+)</text>
        <dbReference type="Rhea" id="RHEA:21668"/>
        <dbReference type="ChEBI" id="CHEBI:15377"/>
        <dbReference type="ChEBI" id="CHEBI:15378"/>
        <dbReference type="ChEBI" id="CHEBI:30616"/>
        <dbReference type="ChEBI" id="CHEBI:43474"/>
        <dbReference type="ChEBI" id="CHEBI:57597"/>
        <dbReference type="ChEBI" id="CHEBI:456216"/>
        <dbReference type="EC" id="7.6.2.10"/>
    </reaction>
</comment>
<comment type="subunit">
    <text evidence="1">The complex is composed of two ATP-binding proteins (UgpC), two transmembrane proteins (UgpA and UgpE) and a solute-binding protein (UgpB).</text>
</comment>
<comment type="subcellular location">
    <subcellularLocation>
        <location evidence="1">Cell inner membrane</location>
        <topology evidence="1">Peripheral membrane protein</topology>
    </subcellularLocation>
</comment>
<comment type="similarity">
    <text evidence="1">Belongs to the ABC transporter superfamily. sn-glycerol-3-phosphate importer (TC 3.A.1.1.3) family.</text>
</comment>
<protein>
    <recommendedName>
        <fullName evidence="1">sn-glycerol-3-phosphate import ATP-binding protein UgpC</fullName>
        <ecNumber evidence="1">7.6.2.10</ecNumber>
    </recommendedName>
</protein>
<evidence type="ECO:0000255" key="1">
    <source>
        <dbReference type="HAMAP-Rule" id="MF_01727"/>
    </source>
</evidence>